<protein>
    <recommendedName>
        <fullName evidence="1">Peptide methionine sulfoxide reductase MsrB</fullName>
        <ecNumber evidence="1">1.8.4.12</ecNumber>
    </recommendedName>
    <alternativeName>
        <fullName evidence="1">Peptide-methionine (R)-S-oxide reductase</fullName>
    </alternativeName>
</protein>
<gene>
    <name evidence="1" type="primary">msrB</name>
    <name type="ordered locus">plu2557</name>
</gene>
<name>MSRB_PHOLL</name>
<sequence length="136" mass="15105">MAKHPEVSLYKELTDIQRHVTQNAGTEPPFSGKLLHNKKSGVYHCLCCEQPLFMSGTKFDSGCGWPSFYQPATHDAVQYLDDDSHNMHRIEVRCGHCNAHLGHVFPDGPQPTGERFCINSAALSFTDENTGEKTVG</sequence>
<proteinExistence type="inferred from homology"/>
<organism>
    <name type="scientific">Photorhabdus laumondii subsp. laumondii (strain DSM 15139 / CIP 105565 / TT01)</name>
    <name type="common">Photorhabdus luminescens subsp. laumondii</name>
    <dbReference type="NCBI Taxonomy" id="243265"/>
    <lineage>
        <taxon>Bacteria</taxon>
        <taxon>Pseudomonadati</taxon>
        <taxon>Pseudomonadota</taxon>
        <taxon>Gammaproteobacteria</taxon>
        <taxon>Enterobacterales</taxon>
        <taxon>Morganellaceae</taxon>
        <taxon>Photorhabdus</taxon>
    </lineage>
</organism>
<keyword id="KW-0479">Metal-binding</keyword>
<keyword id="KW-0560">Oxidoreductase</keyword>
<keyword id="KW-1185">Reference proteome</keyword>
<keyword id="KW-0862">Zinc</keyword>
<accession>Q7N400</accession>
<reference key="1">
    <citation type="journal article" date="2003" name="Nat. Biotechnol.">
        <title>The genome sequence of the entomopathogenic bacterium Photorhabdus luminescens.</title>
        <authorList>
            <person name="Duchaud E."/>
            <person name="Rusniok C."/>
            <person name="Frangeul L."/>
            <person name="Buchrieser C."/>
            <person name="Givaudan A."/>
            <person name="Taourit S."/>
            <person name="Bocs S."/>
            <person name="Boursaux-Eude C."/>
            <person name="Chandler M."/>
            <person name="Charles J.-F."/>
            <person name="Dassa E."/>
            <person name="Derose R."/>
            <person name="Derzelle S."/>
            <person name="Freyssinet G."/>
            <person name="Gaudriault S."/>
            <person name="Medigue C."/>
            <person name="Lanois A."/>
            <person name="Powell K."/>
            <person name="Siguier P."/>
            <person name="Vincent R."/>
            <person name="Wingate V."/>
            <person name="Zouine M."/>
            <person name="Glaser P."/>
            <person name="Boemare N."/>
            <person name="Danchin A."/>
            <person name="Kunst F."/>
        </authorList>
    </citation>
    <scope>NUCLEOTIDE SEQUENCE [LARGE SCALE GENOMIC DNA]</scope>
    <source>
        <strain>DSM 15139 / CIP 105565 / TT01</strain>
    </source>
</reference>
<feature type="chain" id="PRO_1000068280" description="Peptide methionine sulfoxide reductase MsrB">
    <location>
        <begin position="1"/>
        <end position="136"/>
    </location>
</feature>
<feature type="domain" description="MsrB" evidence="2">
    <location>
        <begin position="6"/>
        <end position="128"/>
    </location>
</feature>
<feature type="active site" description="Nucleophile" evidence="2">
    <location>
        <position position="117"/>
    </location>
</feature>
<feature type="binding site" evidence="2">
    <location>
        <position position="45"/>
    </location>
    <ligand>
        <name>Zn(2+)</name>
        <dbReference type="ChEBI" id="CHEBI:29105"/>
    </ligand>
</feature>
<feature type="binding site" evidence="2">
    <location>
        <position position="48"/>
    </location>
    <ligand>
        <name>Zn(2+)</name>
        <dbReference type="ChEBI" id="CHEBI:29105"/>
    </ligand>
</feature>
<feature type="binding site" evidence="2">
    <location>
        <position position="94"/>
    </location>
    <ligand>
        <name>Zn(2+)</name>
        <dbReference type="ChEBI" id="CHEBI:29105"/>
    </ligand>
</feature>
<feature type="binding site" evidence="2">
    <location>
        <position position="97"/>
    </location>
    <ligand>
        <name>Zn(2+)</name>
        <dbReference type="ChEBI" id="CHEBI:29105"/>
    </ligand>
</feature>
<dbReference type="EC" id="1.8.4.12" evidence="1"/>
<dbReference type="EMBL" id="BX571867">
    <property type="protein sequence ID" value="CAE14931.1"/>
    <property type="molecule type" value="Genomic_DNA"/>
</dbReference>
<dbReference type="RefSeq" id="WP_011146780.1">
    <property type="nucleotide sequence ID" value="NC_005126.1"/>
</dbReference>
<dbReference type="SMR" id="Q7N400"/>
<dbReference type="STRING" id="243265.plu2557"/>
<dbReference type="GeneID" id="48848818"/>
<dbReference type="KEGG" id="plu:plu2557"/>
<dbReference type="eggNOG" id="COG0229">
    <property type="taxonomic scope" value="Bacteria"/>
</dbReference>
<dbReference type="HOGENOM" id="CLU_031040_8_5_6"/>
<dbReference type="OrthoDB" id="9785497at2"/>
<dbReference type="Proteomes" id="UP000002514">
    <property type="component" value="Chromosome"/>
</dbReference>
<dbReference type="GO" id="GO:0005737">
    <property type="term" value="C:cytoplasm"/>
    <property type="evidence" value="ECO:0007669"/>
    <property type="project" value="TreeGrafter"/>
</dbReference>
<dbReference type="GO" id="GO:0033743">
    <property type="term" value="F:peptide-methionine (R)-S-oxide reductase activity"/>
    <property type="evidence" value="ECO:0007669"/>
    <property type="project" value="UniProtKB-UniRule"/>
</dbReference>
<dbReference type="GO" id="GO:0008270">
    <property type="term" value="F:zinc ion binding"/>
    <property type="evidence" value="ECO:0007669"/>
    <property type="project" value="UniProtKB-UniRule"/>
</dbReference>
<dbReference type="GO" id="GO:0030091">
    <property type="term" value="P:protein repair"/>
    <property type="evidence" value="ECO:0007669"/>
    <property type="project" value="InterPro"/>
</dbReference>
<dbReference type="GO" id="GO:0006979">
    <property type="term" value="P:response to oxidative stress"/>
    <property type="evidence" value="ECO:0007669"/>
    <property type="project" value="InterPro"/>
</dbReference>
<dbReference type="FunFam" id="2.170.150.20:FF:000001">
    <property type="entry name" value="Peptide methionine sulfoxide reductase MsrB"/>
    <property type="match status" value="1"/>
</dbReference>
<dbReference type="Gene3D" id="2.170.150.20">
    <property type="entry name" value="Peptide methionine sulfoxide reductase"/>
    <property type="match status" value="1"/>
</dbReference>
<dbReference type="HAMAP" id="MF_01400">
    <property type="entry name" value="MsrB"/>
    <property type="match status" value="1"/>
</dbReference>
<dbReference type="InterPro" id="IPR028427">
    <property type="entry name" value="Met_Sox_Rdtase_MsrB"/>
</dbReference>
<dbReference type="InterPro" id="IPR002579">
    <property type="entry name" value="Met_Sox_Rdtase_MsrB_dom"/>
</dbReference>
<dbReference type="InterPro" id="IPR011057">
    <property type="entry name" value="Mss4-like_sf"/>
</dbReference>
<dbReference type="NCBIfam" id="TIGR00357">
    <property type="entry name" value="peptide-methionine (R)-S-oxide reductase MsrB"/>
    <property type="match status" value="1"/>
</dbReference>
<dbReference type="PANTHER" id="PTHR10173">
    <property type="entry name" value="METHIONINE SULFOXIDE REDUCTASE"/>
    <property type="match status" value="1"/>
</dbReference>
<dbReference type="PANTHER" id="PTHR10173:SF52">
    <property type="entry name" value="METHIONINE-R-SULFOXIDE REDUCTASE B1"/>
    <property type="match status" value="1"/>
</dbReference>
<dbReference type="Pfam" id="PF01641">
    <property type="entry name" value="SelR"/>
    <property type="match status" value="1"/>
</dbReference>
<dbReference type="SUPFAM" id="SSF51316">
    <property type="entry name" value="Mss4-like"/>
    <property type="match status" value="1"/>
</dbReference>
<dbReference type="PROSITE" id="PS51790">
    <property type="entry name" value="MSRB"/>
    <property type="match status" value="1"/>
</dbReference>
<evidence type="ECO:0000255" key="1">
    <source>
        <dbReference type="HAMAP-Rule" id="MF_01400"/>
    </source>
</evidence>
<evidence type="ECO:0000255" key="2">
    <source>
        <dbReference type="PROSITE-ProRule" id="PRU01126"/>
    </source>
</evidence>
<comment type="catalytic activity">
    <reaction evidence="1">
        <text>L-methionyl-[protein] + [thioredoxin]-disulfide + H2O = L-methionyl-(R)-S-oxide-[protein] + [thioredoxin]-dithiol</text>
        <dbReference type="Rhea" id="RHEA:24164"/>
        <dbReference type="Rhea" id="RHEA-COMP:10698"/>
        <dbReference type="Rhea" id="RHEA-COMP:10700"/>
        <dbReference type="Rhea" id="RHEA-COMP:12313"/>
        <dbReference type="Rhea" id="RHEA-COMP:12314"/>
        <dbReference type="ChEBI" id="CHEBI:15377"/>
        <dbReference type="ChEBI" id="CHEBI:16044"/>
        <dbReference type="ChEBI" id="CHEBI:29950"/>
        <dbReference type="ChEBI" id="CHEBI:45764"/>
        <dbReference type="ChEBI" id="CHEBI:50058"/>
        <dbReference type="EC" id="1.8.4.12"/>
    </reaction>
</comment>
<comment type="cofactor">
    <cofactor evidence="1">
        <name>Zn(2+)</name>
        <dbReference type="ChEBI" id="CHEBI:29105"/>
    </cofactor>
    <text evidence="1">Binds 1 zinc ion per subunit. The zinc ion is important for the structural integrity of the protein.</text>
</comment>
<comment type="similarity">
    <text evidence="1">Belongs to the MsrB Met sulfoxide reductase family.</text>
</comment>